<sequence length="118" mass="13375">MARIAGVNLPAQKHVWVGLQSIYGIGRTRSKKLCESAGVTSTTKIRDLSEPEIERLRAEVGKYVVEGDLRREIGIAIKRLMDLGCYRGLRHRRGLPLRGQRTRTNARTRKGPRKAIRK</sequence>
<accession>Q4URG0</accession>
<dbReference type="EMBL" id="CP000050">
    <property type="protein sequence ID" value="AAY50363.1"/>
    <property type="molecule type" value="Genomic_DNA"/>
</dbReference>
<dbReference type="RefSeq" id="WP_003486672.1">
    <property type="nucleotide sequence ID" value="NZ_CP155948.1"/>
</dbReference>
<dbReference type="SMR" id="Q4URG0"/>
<dbReference type="GeneID" id="97509357"/>
<dbReference type="KEGG" id="xcb:XC_3319"/>
<dbReference type="HOGENOM" id="CLU_103849_1_2_6"/>
<dbReference type="Proteomes" id="UP000000420">
    <property type="component" value="Chromosome"/>
</dbReference>
<dbReference type="GO" id="GO:0005829">
    <property type="term" value="C:cytosol"/>
    <property type="evidence" value="ECO:0007669"/>
    <property type="project" value="TreeGrafter"/>
</dbReference>
<dbReference type="GO" id="GO:0015935">
    <property type="term" value="C:small ribosomal subunit"/>
    <property type="evidence" value="ECO:0007669"/>
    <property type="project" value="TreeGrafter"/>
</dbReference>
<dbReference type="GO" id="GO:0019843">
    <property type="term" value="F:rRNA binding"/>
    <property type="evidence" value="ECO:0007669"/>
    <property type="project" value="UniProtKB-UniRule"/>
</dbReference>
<dbReference type="GO" id="GO:0003735">
    <property type="term" value="F:structural constituent of ribosome"/>
    <property type="evidence" value="ECO:0007669"/>
    <property type="project" value="InterPro"/>
</dbReference>
<dbReference type="GO" id="GO:0000049">
    <property type="term" value="F:tRNA binding"/>
    <property type="evidence" value="ECO:0007669"/>
    <property type="project" value="UniProtKB-UniRule"/>
</dbReference>
<dbReference type="GO" id="GO:0006412">
    <property type="term" value="P:translation"/>
    <property type="evidence" value="ECO:0007669"/>
    <property type="project" value="UniProtKB-UniRule"/>
</dbReference>
<dbReference type="FunFam" id="1.10.8.50:FF:000001">
    <property type="entry name" value="30S ribosomal protein S13"/>
    <property type="match status" value="1"/>
</dbReference>
<dbReference type="FunFam" id="4.10.910.10:FF:000001">
    <property type="entry name" value="30S ribosomal protein S13"/>
    <property type="match status" value="1"/>
</dbReference>
<dbReference type="Gene3D" id="1.10.8.50">
    <property type="match status" value="1"/>
</dbReference>
<dbReference type="Gene3D" id="4.10.910.10">
    <property type="entry name" value="30s ribosomal protein s13, domain 2"/>
    <property type="match status" value="1"/>
</dbReference>
<dbReference type="HAMAP" id="MF_01315">
    <property type="entry name" value="Ribosomal_uS13"/>
    <property type="match status" value="1"/>
</dbReference>
<dbReference type="InterPro" id="IPR027437">
    <property type="entry name" value="Rbsml_uS13_C"/>
</dbReference>
<dbReference type="InterPro" id="IPR001892">
    <property type="entry name" value="Ribosomal_uS13"/>
</dbReference>
<dbReference type="InterPro" id="IPR010979">
    <property type="entry name" value="Ribosomal_uS13-like_H2TH"/>
</dbReference>
<dbReference type="InterPro" id="IPR019980">
    <property type="entry name" value="Ribosomal_uS13_bac-type"/>
</dbReference>
<dbReference type="InterPro" id="IPR018269">
    <property type="entry name" value="Ribosomal_uS13_CS"/>
</dbReference>
<dbReference type="NCBIfam" id="TIGR03631">
    <property type="entry name" value="uS13_bact"/>
    <property type="match status" value="1"/>
</dbReference>
<dbReference type="PANTHER" id="PTHR10871">
    <property type="entry name" value="30S RIBOSOMAL PROTEIN S13/40S RIBOSOMAL PROTEIN S18"/>
    <property type="match status" value="1"/>
</dbReference>
<dbReference type="PANTHER" id="PTHR10871:SF1">
    <property type="entry name" value="SMALL RIBOSOMAL SUBUNIT PROTEIN US13M"/>
    <property type="match status" value="1"/>
</dbReference>
<dbReference type="Pfam" id="PF00416">
    <property type="entry name" value="Ribosomal_S13"/>
    <property type="match status" value="1"/>
</dbReference>
<dbReference type="PIRSF" id="PIRSF002134">
    <property type="entry name" value="Ribosomal_S13"/>
    <property type="match status" value="1"/>
</dbReference>
<dbReference type="SUPFAM" id="SSF46946">
    <property type="entry name" value="S13-like H2TH domain"/>
    <property type="match status" value="1"/>
</dbReference>
<dbReference type="PROSITE" id="PS00646">
    <property type="entry name" value="RIBOSOMAL_S13_1"/>
    <property type="match status" value="1"/>
</dbReference>
<dbReference type="PROSITE" id="PS50159">
    <property type="entry name" value="RIBOSOMAL_S13_2"/>
    <property type="match status" value="1"/>
</dbReference>
<reference key="1">
    <citation type="journal article" date="2005" name="Genome Res.">
        <title>Comparative and functional genomic analyses of the pathogenicity of phytopathogen Xanthomonas campestris pv. campestris.</title>
        <authorList>
            <person name="Qian W."/>
            <person name="Jia Y."/>
            <person name="Ren S.-X."/>
            <person name="He Y.-Q."/>
            <person name="Feng J.-X."/>
            <person name="Lu L.-F."/>
            <person name="Sun Q."/>
            <person name="Ying G."/>
            <person name="Tang D.-J."/>
            <person name="Tang H."/>
            <person name="Wu W."/>
            <person name="Hao P."/>
            <person name="Wang L."/>
            <person name="Jiang B.-L."/>
            <person name="Zeng S."/>
            <person name="Gu W.-Y."/>
            <person name="Lu G."/>
            <person name="Rong L."/>
            <person name="Tian Y."/>
            <person name="Yao Z."/>
            <person name="Fu G."/>
            <person name="Chen B."/>
            <person name="Fang R."/>
            <person name="Qiang B."/>
            <person name="Chen Z."/>
            <person name="Zhao G.-P."/>
            <person name="Tang J.-L."/>
            <person name="He C."/>
        </authorList>
    </citation>
    <scope>NUCLEOTIDE SEQUENCE [LARGE SCALE GENOMIC DNA]</scope>
    <source>
        <strain>8004</strain>
    </source>
</reference>
<name>RS13_XANC8</name>
<gene>
    <name evidence="1" type="primary">rpsM</name>
    <name type="ordered locus">XC_3319</name>
</gene>
<keyword id="KW-0687">Ribonucleoprotein</keyword>
<keyword id="KW-0689">Ribosomal protein</keyword>
<keyword id="KW-0694">RNA-binding</keyword>
<keyword id="KW-0699">rRNA-binding</keyword>
<keyword id="KW-0820">tRNA-binding</keyword>
<evidence type="ECO:0000255" key="1">
    <source>
        <dbReference type="HAMAP-Rule" id="MF_01315"/>
    </source>
</evidence>
<evidence type="ECO:0000256" key="2">
    <source>
        <dbReference type="SAM" id="MobiDB-lite"/>
    </source>
</evidence>
<evidence type="ECO:0000305" key="3"/>
<organism>
    <name type="scientific">Xanthomonas campestris pv. campestris (strain 8004)</name>
    <dbReference type="NCBI Taxonomy" id="314565"/>
    <lineage>
        <taxon>Bacteria</taxon>
        <taxon>Pseudomonadati</taxon>
        <taxon>Pseudomonadota</taxon>
        <taxon>Gammaproteobacteria</taxon>
        <taxon>Lysobacterales</taxon>
        <taxon>Lysobacteraceae</taxon>
        <taxon>Xanthomonas</taxon>
    </lineage>
</organism>
<proteinExistence type="inferred from homology"/>
<protein>
    <recommendedName>
        <fullName evidence="1">Small ribosomal subunit protein uS13</fullName>
    </recommendedName>
    <alternativeName>
        <fullName evidence="3">30S ribosomal protein S13</fullName>
    </alternativeName>
</protein>
<comment type="function">
    <text evidence="1">Located at the top of the head of the 30S subunit, it contacts several helices of the 16S rRNA. In the 70S ribosome it contacts the 23S rRNA (bridge B1a) and protein L5 of the 50S subunit (bridge B1b), connecting the 2 subunits; these bridges are implicated in subunit movement. Contacts the tRNAs in the A and P-sites.</text>
</comment>
<comment type="subunit">
    <text evidence="1">Part of the 30S ribosomal subunit. Forms a loose heterodimer with protein S19. Forms two bridges to the 50S subunit in the 70S ribosome.</text>
</comment>
<comment type="similarity">
    <text evidence="1">Belongs to the universal ribosomal protein uS13 family.</text>
</comment>
<feature type="chain" id="PRO_0000230581" description="Small ribosomal subunit protein uS13">
    <location>
        <begin position="1"/>
        <end position="118"/>
    </location>
</feature>
<feature type="region of interest" description="Disordered" evidence="2">
    <location>
        <begin position="94"/>
        <end position="118"/>
    </location>
</feature>